<feature type="chain" id="PRO_0000056034" description="E3 ubiquitin-protein ligase RHA1B">
    <location>
        <begin position="1"/>
        <end position="157"/>
    </location>
</feature>
<feature type="zinc finger region" description="RING-type; atypical" evidence="1">
    <location>
        <begin position="85"/>
        <end position="129"/>
    </location>
</feature>
<feature type="sequence conflict" description="In Ref. 1; AAC68670 and 6; AAM65159." evidence="4" ref="1 6">
    <original>S</original>
    <variation>P</variation>
    <location>
        <position position="51"/>
    </location>
</feature>
<dbReference type="EC" id="2.3.2.27"/>
<dbReference type="EMBL" id="AF078821">
    <property type="protein sequence ID" value="AAC68670.1"/>
    <property type="molecule type" value="mRNA"/>
</dbReference>
<dbReference type="EMBL" id="DQ059119">
    <property type="protein sequence ID" value="AAY57605.1"/>
    <property type="molecule type" value="mRNA"/>
</dbReference>
<dbReference type="EMBL" id="AL096882">
    <property type="protein sequence ID" value="CAB51420.1"/>
    <property type="molecule type" value="Genomic_DNA"/>
</dbReference>
<dbReference type="EMBL" id="AL161531">
    <property type="protein sequence ID" value="CAB81237.1"/>
    <property type="molecule type" value="Genomic_DNA"/>
</dbReference>
<dbReference type="EMBL" id="CP002687">
    <property type="protein sequence ID" value="AEE83001.1"/>
    <property type="molecule type" value="Genomic_DNA"/>
</dbReference>
<dbReference type="EMBL" id="AY065243">
    <property type="protein sequence ID" value="AAL38719.1"/>
    <property type="molecule type" value="mRNA"/>
</dbReference>
<dbReference type="EMBL" id="AY117300">
    <property type="protein sequence ID" value="AAM51375.1"/>
    <property type="molecule type" value="mRNA"/>
</dbReference>
<dbReference type="EMBL" id="AY087618">
    <property type="protein sequence ID" value="AAM65159.1"/>
    <property type="molecule type" value="mRNA"/>
</dbReference>
<dbReference type="PIR" id="T13027">
    <property type="entry name" value="T13027"/>
</dbReference>
<dbReference type="PIR" id="T51841">
    <property type="entry name" value="T51841"/>
</dbReference>
<dbReference type="RefSeq" id="NP_192875.1">
    <property type="nucleotide sequence ID" value="NM_117207.3"/>
</dbReference>
<dbReference type="SMR" id="Q9SUS5"/>
<dbReference type="STRING" id="3702.Q9SUS5"/>
<dbReference type="PaxDb" id="3702-AT4G11360.1"/>
<dbReference type="EnsemblPlants" id="AT4G11360.1">
    <property type="protein sequence ID" value="AT4G11360.1"/>
    <property type="gene ID" value="AT4G11360"/>
</dbReference>
<dbReference type="GeneID" id="826738"/>
<dbReference type="Gramene" id="AT4G11360.1">
    <property type="protein sequence ID" value="AT4G11360.1"/>
    <property type="gene ID" value="AT4G11360"/>
</dbReference>
<dbReference type="KEGG" id="ath:AT4G11360"/>
<dbReference type="Araport" id="AT4G11360"/>
<dbReference type="TAIR" id="AT4G11360">
    <property type="gene designation" value="RHA1B"/>
</dbReference>
<dbReference type="eggNOG" id="KOG0800">
    <property type="taxonomic scope" value="Eukaryota"/>
</dbReference>
<dbReference type="HOGENOM" id="CLU_013137_18_2_1"/>
<dbReference type="InParanoid" id="Q9SUS5"/>
<dbReference type="OMA" id="RWIVDCN"/>
<dbReference type="PhylomeDB" id="Q9SUS5"/>
<dbReference type="UniPathway" id="UPA00143"/>
<dbReference type="PRO" id="PR:Q9SUS5"/>
<dbReference type="Proteomes" id="UP000006548">
    <property type="component" value="Chromosome 4"/>
</dbReference>
<dbReference type="ExpressionAtlas" id="Q9SUS5">
    <property type="expression patterns" value="baseline and differential"/>
</dbReference>
<dbReference type="GO" id="GO:0004842">
    <property type="term" value="F:ubiquitin-protein transferase activity"/>
    <property type="evidence" value="ECO:0000314"/>
    <property type="project" value="UniProtKB"/>
</dbReference>
<dbReference type="GO" id="GO:0008270">
    <property type="term" value="F:zinc ion binding"/>
    <property type="evidence" value="ECO:0007669"/>
    <property type="project" value="UniProtKB-KW"/>
</dbReference>
<dbReference type="GO" id="GO:0016567">
    <property type="term" value="P:protein ubiquitination"/>
    <property type="evidence" value="ECO:0000314"/>
    <property type="project" value="UniProtKB"/>
</dbReference>
<dbReference type="CDD" id="cd23121">
    <property type="entry name" value="RING-H2_RHA1-like"/>
    <property type="match status" value="1"/>
</dbReference>
<dbReference type="Gene3D" id="3.30.40.10">
    <property type="entry name" value="Zinc/RING finger domain, C3HC4 (zinc finger)"/>
    <property type="match status" value="1"/>
</dbReference>
<dbReference type="InterPro" id="IPR001841">
    <property type="entry name" value="Znf_RING"/>
</dbReference>
<dbReference type="InterPro" id="IPR013083">
    <property type="entry name" value="Znf_RING/FYVE/PHD"/>
</dbReference>
<dbReference type="PANTHER" id="PTHR45969:SF12">
    <property type="entry name" value="E3 UBIQUITIN-PROTEIN LIGASE RHA1A-RELATED"/>
    <property type="match status" value="1"/>
</dbReference>
<dbReference type="PANTHER" id="PTHR45969">
    <property type="entry name" value="RING ZINC FINGER PROTEIN-RELATED"/>
    <property type="match status" value="1"/>
</dbReference>
<dbReference type="Pfam" id="PF13639">
    <property type="entry name" value="zf-RING_2"/>
    <property type="match status" value="1"/>
</dbReference>
<dbReference type="SMART" id="SM00184">
    <property type="entry name" value="RING"/>
    <property type="match status" value="1"/>
</dbReference>
<dbReference type="SUPFAM" id="SSF57850">
    <property type="entry name" value="RING/U-box"/>
    <property type="match status" value="1"/>
</dbReference>
<dbReference type="PROSITE" id="PS50089">
    <property type="entry name" value="ZF_RING_2"/>
    <property type="match status" value="1"/>
</dbReference>
<comment type="function">
    <text evidence="2">Possesses E3 ubiquitin-protein ligase activity when associated with the E2 enzyme UBC8 in vitro.</text>
</comment>
<comment type="catalytic activity">
    <reaction>
        <text>S-ubiquitinyl-[E2 ubiquitin-conjugating enzyme]-L-cysteine + [acceptor protein]-L-lysine = [E2 ubiquitin-conjugating enzyme]-L-cysteine + N(6)-ubiquitinyl-[acceptor protein]-L-lysine.</text>
        <dbReference type="EC" id="2.3.2.27"/>
    </reaction>
</comment>
<comment type="pathway">
    <text>Protein modification; protein ubiquitination.</text>
</comment>
<evidence type="ECO:0000255" key="1">
    <source>
        <dbReference type="PROSITE-ProRule" id="PRU00175"/>
    </source>
</evidence>
<evidence type="ECO:0000269" key="2">
    <source>
    </source>
</evidence>
<evidence type="ECO:0000303" key="3">
    <source>
    </source>
</evidence>
<evidence type="ECO:0000305" key="4"/>
<name>RHA1B_ARATH</name>
<protein>
    <recommendedName>
        <fullName evidence="4">E3 ubiquitin-protein ligase RHA1B</fullName>
        <ecNumber>2.3.2.27</ecNumber>
    </recommendedName>
    <alternativeName>
        <fullName evidence="3">RING-H2 finger A1b</fullName>
    </alternativeName>
    <alternativeName>
        <fullName evidence="4">RING-H2 zinc finger protein RHA1b</fullName>
    </alternativeName>
    <alternativeName>
        <fullName evidence="4">RING-type E3 ubiquitin transferase RHA1B</fullName>
    </alternativeName>
</protein>
<organism>
    <name type="scientific">Arabidopsis thaliana</name>
    <name type="common">Mouse-ear cress</name>
    <dbReference type="NCBI Taxonomy" id="3702"/>
    <lineage>
        <taxon>Eukaryota</taxon>
        <taxon>Viridiplantae</taxon>
        <taxon>Streptophyta</taxon>
        <taxon>Embryophyta</taxon>
        <taxon>Tracheophyta</taxon>
        <taxon>Spermatophyta</taxon>
        <taxon>Magnoliopsida</taxon>
        <taxon>eudicotyledons</taxon>
        <taxon>Gunneridae</taxon>
        <taxon>Pentapetalae</taxon>
        <taxon>rosids</taxon>
        <taxon>malvids</taxon>
        <taxon>Brassicales</taxon>
        <taxon>Brassicaceae</taxon>
        <taxon>Camelineae</taxon>
        <taxon>Arabidopsis</taxon>
    </lineage>
</organism>
<proteinExistence type="evidence at transcript level"/>
<accession>Q9SUS5</accession>
<accession>Q4TU17</accession>
<accession>Q9ZT51</accession>
<gene>
    <name evidence="3" type="primary">RHA1B</name>
    <name type="ordered locus">At4g11360</name>
    <name type="ORF">F8L21.150</name>
</gene>
<reference key="1">
    <citation type="journal article" date="1998" name="FEBS Lett.">
        <title>Widespread occurrence of a highly conserved RING-H2 zinc finger motif in the model plant Arabidopsis thaliana.</title>
        <authorList>
            <person name="Jensen R.B."/>
            <person name="Jensen K.L."/>
            <person name="Jespersen H.M."/>
            <person name="Skriver K."/>
        </authorList>
    </citation>
    <scope>NUCLEOTIDE SEQUENCE [MRNA]</scope>
    <source>
        <strain>cv. Columbia</strain>
    </source>
</reference>
<reference key="2">
    <citation type="journal article" date="2005" name="Plant Physiol.">
        <title>Functional analysis of the RING-type ubiquitin ligase family of Arabidopsis.</title>
        <authorList>
            <person name="Stone S.L."/>
            <person name="Hauksdottir H."/>
            <person name="Troy A."/>
            <person name="Herschleb J."/>
            <person name="Kraft E."/>
            <person name="Callis J."/>
        </authorList>
    </citation>
    <scope>NUCLEOTIDE SEQUENCE [MRNA]</scope>
    <scope>FUNCTION</scope>
    <source>
        <strain>cv. Columbia</strain>
        <tissue>Leaf</tissue>
    </source>
</reference>
<reference key="3">
    <citation type="journal article" date="1999" name="Nature">
        <title>Sequence and analysis of chromosome 4 of the plant Arabidopsis thaliana.</title>
        <authorList>
            <person name="Mayer K.F.X."/>
            <person name="Schueller C."/>
            <person name="Wambutt R."/>
            <person name="Murphy G."/>
            <person name="Volckaert G."/>
            <person name="Pohl T."/>
            <person name="Duesterhoeft A."/>
            <person name="Stiekema W."/>
            <person name="Entian K.-D."/>
            <person name="Terryn N."/>
            <person name="Harris B."/>
            <person name="Ansorge W."/>
            <person name="Brandt P."/>
            <person name="Grivell L.A."/>
            <person name="Rieger M."/>
            <person name="Weichselgartner M."/>
            <person name="de Simone V."/>
            <person name="Obermaier B."/>
            <person name="Mache R."/>
            <person name="Mueller M."/>
            <person name="Kreis M."/>
            <person name="Delseny M."/>
            <person name="Puigdomenech P."/>
            <person name="Watson M."/>
            <person name="Schmidtheini T."/>
            <person name="Reichert B."/>
            <person name="Portetelle D."/>
            <person name="Perez-Alonso M."/>
            <person name="Boutry M."/>
            <person name="Bancroft I."/>
            <person name="Vos P."/>
            <person name="Hoheisel J."/>
            <person name="Zimmermann W."/>
            <person name="Wedler H."/>
            <person name="Ridley P."/>
            <person name="Langham S.-A."/>
            <person name="McCullagh B."/>
            <person name="Bilham L."/>
            <person name="Robben J."/>
            <person name="van der Schueren J."/>
            <person name="Grymonprez B."/>
            <person name="Chuang Y.-J."/>
            <person name="Vandenbussche F."/>
            <person name="Braeken M."/>
            <person name="Weltjens I."/>
            <person name="Voet M."/>
            <person name="Bastiaens I."/>
            <person name="Aert R."/>
            <person name="Defoor E."/>
            <person name="Weitzenegger T."/>
            <person name="Bothe G."/>
            <person name="Ramsperger U."/>
            <person name="Hilbert H."/>
            <person name="Braun M."/>
            <person name="Holzer E."/>
            <person name="Brandt A."/>
            <person name="Peters S."/>
            <person name="van Staveren M."/>
            <person name="Dirkse W."/>
            <person name="Mooijman P."/>
            <person name="Klein Lankhorst R."/>
            <person name="Rose M."/>
            <person name="Hauf J."/>
            <person name="Koetter P."/>
            <person name="Berneiser S."/>
            <person name="Hempel S."/>
            <person name="Feldpausch M."/>
            <person name="Lamberth S."/>
            <person name="Van den Daele H."/>
            <person name="De Keyser A."/>
            <person name="Buysshaert C."/>
            <person name="Gielen J."/>
            <person name="Villarroel R."/>
            <person name="De Clercq R."/>
            <person name="van Montagu M."/>
            <person name="Rogers J."/>
            <person name="Cronin A."/>
            <person name="Quail M.A."/>
            <person name="Bray-Allen S."/>
            <person name="Clark L."/>
            <person name="Doggett J."/>
            <person name="Hall S."/>
            <person name="Kay M."/>
            <person name="Lennard N."/>
            <person name="McLay K."/>
            <person name="Mayes R."/>
            <person name="Pettett A."/>
            <person name="Rajandream M.A."/>
            <person name="Lyne M."/>
            <person name="Benes V."/>
            <person name="Rechmann S."/>
            <person name="Borkova D."/>
            <person name="Bloecker H."/>
            <person name="Scharfe M."/>
            <person name="Grimm M."/>
            <person name="Loehnert T.-H."/>
            <person name="Dose S."/>
            <person name="de Haan M."/>
            <person name="Maarse A.C."/>
            <person name="Schaefer M."/>
            <person name="Mueller-Auer S."/>
            <person name="Gabel C."/>
            <person name="Fuchs M."/>
            <person name="Fartmann B."/>
            <person name="Granderath K."/>
            <person name="Dauner D."/>
            <person name="Herzl A."/>
            <person name="Neumann S."/>
            <person name="Argiriou A."/>
            <person name="Vitale D."/>
            <person name="Liguori R."/>
            <person name="Piravandi E."/>
            <person name="Massenet O."/>
            <person name="Quigley F."/>
            <person name="Clabauld G."/>
            <person name="Muendlein A."/>
            <person name="Felber R."/>
            <person name="Schnabl S."/>
            <person name="Hiller R."/>
            <person name="Schmidt W."/>
            <person name="Lecharny A."/>
            <person name="Aubourg S."/>
            <person name="Chefdor F."/>
            <person name="Cooke R."/>
            <person name="Berger C."/>
            <person name="Monfort A."/>
            <person name="Casacuberta E."/>
            <person name="Gibbons T."/>
            <person name="Weber N."/>
            <person name="Vandenbol M."/>
            <person name="Bargues M."/>
            <person name="Terol J."/>
            <person name="Torres A."/>
            <person name="Perez-Perez A."/>
            <person name="Purnelle B."/>
            <person name="Bent E."/>
            <person name="Johnson S."/>
            <person name="Tacon D."/>
            <person name="Jesse T."/>
            <person name="Heijnen L."/>
            <person name="Schwarz S."/>
            <person name="Scholler P."/>
            <person name="Heber S."/>
            <person name="Francs P."/>
            <person name="Bielke C."/>
            <person name="Frishman D."/>
            <person name="Haase D."/>
            <person name="Lemcke K."/>
            <person name="Mewes H.-W."/>
            <person name="Stocker S."/>
            <person name="Zaccaria P."/>
            <person name="Bevan M."/>
            <person name="Wilson R.K."/>
            <person name="de la Bastide M."/>
            <person name="Habermann K."/>
            <person name="Parnell L."/>
            <person name="Dedhia N."/>
            <person name="Gnoj L."/>
            <person name="Schutz K."/>
            <person name="Huang E."/>
            <person name="Spiegel L."/>
            <person name="Sekhon M."/>
            <person name="Murray J."/>
            <person name="Sheet P."/>
            <person name="Cordes M."/>
            <person name="Abu-Threideh J."/>
            <person name="Stoneking T."/>
            <person name="Kalicki J."/>
            <person name="Graves T."/>
            <person name="Harmon G."/>
            <person name="Edwards J."/>
            <person name="Latreille P."/>
            <person name="Courtney L."/>
            <person name="Cloud J."/>
            <person name="Abbott A."/>
            <person name="Scott K."/>
            <person name="Johnson D."/>
            <person name="Minx P."/>
            <person name="Bentley D."/>
            <person name="Fulton B."/>
            <person name="Miller N."/>
            <person name="Greco T."/>
            <person name="Kemp K."/>
            <person name="Kramer J."/>
            <person name="Fulton L."/>
            <person name="Mardis E."/>
            <person name="Dante M."/>
            <person name="Pepin K."/>
            <person name="Hillier L.W."/>
            <person name="Nelson J."/>
            <person name="Spieth J."/>
            <person name="Ryan E."/>
            <person name="Andrews S."/>
            <person name="Geisel C."/>
            <person name="Layman D."/>
            <person name="Du H."/>
            <person name="Ali J."/>
            <person name="Berghoff A."/>
            <person name="Jones K."/>
            <person name="Drone K."/>
            <person name="Cotton M."/>
            <person name="Joshu C."/>
            <person name="Antonoiu B."/>
            <person name="Zidanic M."/>
            <person name="Strong C."/>
            <person name="Sun H."/>
            <person name="Lamar B."/>
            <person name="Yordan C."/>
            <person name="Ma P."/>
            <person name="Zhong J."/>
            <person name="Preston R."/>
            <person name="Vil D."/>
            <person name="Shekher M."/>
            <person name="Matero A."/>
            <person name="Shah R."/>
            <person name="Swaby I.K."/>
            <person name="O'Shaughnessy A."/>
            <person name="Rodriguez M."/>
            <person name="Hoffman J."/>
            <person name="Till S."/>
            <person name="Granat S."/>
            <person name="Shohdy N."/>
            <person name="Hasegawa A."/>
            <person name="Hameed A."/>
            <person name="Lodhi M."/>
            <person name="Johnson A."/>
            <person name="Chen E."/>
            <person name="Marra M.A."/>
            <person name="Martienssen R."/>
            <person name="McCombie W.R."/>
        </authorList>
    </citation>
    <scope>NUCLEOTIDE SEQUENCE [LARGE SCALE GENOMIC DNA]</scope>
    <source>
        <strain>cv. Columbia</strain>
    </source>
</reference>
<reference key="4">
    <citation type="journal article" date="2017" name="Plant J.">
        <title>Araport11: a complete reannotation of the Arabidopsis thaliana reference genome.</title>
        <authorList>
            <person name="Cheng C.Y."/>
            <person name="Krishnakumar V."/>
            <person name="Chan A.P."/>
            <person name="Thibaud-Nissen F."/>
            <person name="Schobel S."/>
            <person name="Town C.D."/>
        </authorList>
    </citation>
    <scope>GENOME REANNOTATION</scope>
    <source>
        <strain>cv. Columbia</strain>
    </source>
</reference>
<reference key="5">
    <citation type="journal article" date="2003" name="Science">
        <title>Empirical analysis of transcriptional activity in the Arabidopsis genome.</title>
        <authorList>
            <person name="Yamada K."/>
            <person name="Lim J."/>
            <person name="Dale J.M."/>
            <person name="Chen H."/>
            <person name="Shinn P."/>
            <person name="Palm C.J."/>
            <person name="Southwick A.M."/>
            <person name="Wu H.C."/>
            <person name="Kim C.J."/>
            <person name="Nguyen M."/>
            <person name="Pham P.K."/>
            <person name="Cheuk R.F."/>
            <person name="Karlin-Newmann G."/>
            <person name="Liu S.X."/>
            <person name="Lam B."/>
            <person name="Sakano H."/>
            <person name="Wu T."/>
            <person name="Yu G."/>
            <person name="Miranda M."/>
            <person name="Quach H.L."/>
            <person name="Tripp M."/>
            <person name="Chang C.H."/>
            <person name="Lee J.M."/>
            <person name="Toriumi M.J."/>
            <person name="Chan M.M."/>
            <person name="Tang C.C."/>
            <person name="Onodera C.S."/>
            <person name="Deng J.M."/>
            <person name="Akiyama K."/>
            <person name="Ansari Y."/>
            <person name="Arakawa T."/>
            <person name="Banh J."/>
            <person name="Banno F."/>
            <person name="Bowser L."/>
            <person name="Brooks S.Y."/>
            <person name="Carninci P."/>
            <person name="Chao Q."/>
            <person name="Choy N."/>
            <person name="Enju A."/>
            <person name="Goldsmith A.D."/>
            <person name="Gurjal M."/>
            <person name="Hansen N.F."/>
            <person name="Hayashizaki Y."/>
            <person name="Johnson-Hopson C."/>
            <person name="Hsuan V.W."/>
            <person name="Iida K."/>
            <person name="Karnes M."/>
            <person name="Khan S."/>
            <person name="Koesema E."/>
            <person name="Ishida J."/>
            <person name="Jiang P.X."/>
            <person name="Jones T."/>
            <person name="Kawai J."/>
            <person name="Kamiya A."/>
            <person name="Meyers C."/>
            <person name="Nakajima M."/>
            <person name="Narusaka M."/>
            <person name="Seki M."/>
            <person name="Sakurai T."/>
            <person name="Satou M."/>
            <person name="Tamse R."/>
            <person name="Vaysberg M."/>
            <person name="Wallender E.K."/>
            <person name="Wong C."/>
            <person name="Yamamura Y."/>
            <person name="Yuan S."/>
            <person name="Shinozaki K."/>
            <person name="Davis R.W."/>
            <person name="Theologis A."/>
            <person name="Ecker J.R."/>
        </authorList>
    </citation>
    <scope>NUCLEOTIDE SEQUENCE [LARGE SCALE MRNA]</scope>
    <source>
        <strain>cv. Columbia</strain>
    </source>
</reference>
<reference key="6">
    <citation type="submission" date="2002-03" db="EMBL/GenBank/DDBJ databases">
        <title>Full-length cDNA from Arabidopsis thaliana.</title>
        <authorList>
            <person name="Brover V.V."/>
            <person name="Troukhan M.E."/>
            <person name="Alexandrov N.A."/>
            <person name="Lu Y.-P."/>
            <person name="Flavell R.B."/>
            <person name="Feldmann K.A."/>
        </authorList>
    </citation>
    <scope>NUCLEOTIDE SEQUENCE [LARGE SCALE MRNA]</scope>
</reference>
<keyword id="KW-0479">Metal-binding</keyword>
<keyword id="KW-1185">Reference proteome</keyword>
<keyword id="KW-0808">Transferase</keyword>
<keyword id="KW-0833">Ubl conjugation pathway</keyword>
<keyword id="KW-0862">Zinc</keyword>
<keyword id="KW-0863">Zinc-finger</keyword>
<sequence length="157" mass="17996">MGLPTDFKELQIPGYVLKTLYVIGFFRDMVDALCPYIGLPSFLDHNETSRSDPTRLALSTSATLANELIPVVRFSDLLTDPEDCCTVCLSDFVSDDKIRQLPKCGHVFHHRCLDRWIVDCNKITCPICRNRFLPEEKSTPFDWGTSDWFRDEVESTN</sequence>